<comment type="function">
    <text evidence="1">Catalyzes the attachment of tyrosine to tRNA(Tyr) in a two-step reaction: tyrosine is first activated by ATP to form Tyr-AMP and then transferred to the acceptor end of tRNA(Tyr).</text>
</comment>
<comment type="catalytic activity">
    <reaction evidence="1">
        <text>tRNA(Tyr) + L-tyrosine + ATP = L-tyrosyl-tRNA(Tyr) + AMP + diphosphate + H(+)</text>
        <dbReference type="Rhea" id="RHEA:10220"/>
        <dbReference type="Rhea" id="RHEA-COMP:9706"/>
        <dbReference type="Rhea" id="RHEA-COMP:9707"/>
        <dbReference type="ChEBI" id="CHEBI:15378"/>
        <dbReference type="ChEBI" id="CHEBI:30616"/>
        <dbReference type="ChEBI" id="CHEBI:33019"/>
        <dbReference type="ChEBI" id="CHEBI:58315"/>
        <dbReference type="ChEBI" id="CHEBI:78442"/>
        <dbReference type="ChEBI" id="CHEBI:78536"/>
        <dbReference type="ChEBI" id="CHEBI:456215"/>
        <dbReference type="EC" id="6.1.1.1"/>
    </reaction>
</comment>
<comment type="subunit">
    <text evidence="1">Homodimer.</text>
</comment>
<comment type="subcellular location">
    <subcellularLocation>
        <location evidence="1">Cytoplasm</location>
    </subcellularLocation>
</comment>
<comment type="similarity">
    <text evidence="1">Belongs to the class-I aminoacyl-tRNA synthetase family. TyrS type 1 subfamily.</text>
</comment>
<protein>
    <recommendedName>
        <fullName evidence="1">Tyrosine--tRNA ligase</fullName>
        <ecNumber evidence="1">6.1.1.1</ecNumber>
    </recommendedName>
    <alternativeName>
        <fullName evidence="1">Tyrosyl-tRNA synthetase</fullName>
        <shortName evidence="1">TyrRS</shortName>
    </alternativeName>
</protein>
<name>SYY_CLOBJ</name>
<evidence type="ECO:0000255" key="1">
    <source>
        <dbReference type="HAMAP-Rule" id="MF_02006"/>
    </source>
</evidence>
<keyword id="KW-0030">Aminoacyl-tRNA synthetase</keyword>
<keyword id="KW-0067">ATP-binding</keyword>
<keyword id="KW-0963">Cytoplasm</keyword>
<keyword id="KW-0436">Ligase</keyword>
<keyword id="KW-0547">Nucleotide-binding</keyword>
<keyword id="KW-0648">Protein biosynthesis</keyword>
<keyword id="KW-0694">RNA-binding</keyword>
<feature type="chain" id="PRO_1000189276" description="Tyrosine--tRNA ligase">
    <location>
        <begin position="1"/>
        <end position="407"/>
    </location>
</feature>
<feature type="domain" description="S4 RNA-binding" evidence="1">
    <location>
        <begin position="341"/>
        <end position="405"/>
    </location>
</feature>
<feature type="short sequence motif" description="'HIGH' region">
    <location>
        <begin position="40"/>
        <end position="49"/>
    </location>
</feature>
<feature type="short sequence motif" description="'KMSKS' region">
    <location>
        <begin position="228"/>
        <end position="232"/>
    </location>
</feature>
<feature type="binding site" evidence="1">
    <location>
        <position position="35"/>
    </location>
    <ligand>
        <name>L-tyrosine</name>
        <dbReference type="ChEBI" id="CHEBI:58315"/>
    </ligand>
</feature>
<feature type="binding site" evidence="1">
    <location>
        <position position="168"/>
    </location>
    <ligand>
        <name>L-tyrosine</name>
        <dbReference type="ChEBI" id="CHEBI:58315"/>
    </ligand>
</feature>
<feature type="binding site" evidence="1">
    <location>
        <position position="172"/>
    </location>
    <ligand>
        <name>L-tyrosine</name>
        <dbReference type="ChEBI" id="CHEBI:58315"/>
    </ligand>
</feature>
<feature type="binding site" evidence="1">
    <location>
        <position position="231"/>
    </location>
    <ligand>
        <name>ATP</name>
        <dbReference type="ChEBI" id="CHEBI:30616"/>
    </ligand>
</feature>
<organism>
    <name type="scientific">Clostridium botulinum (strain Kyoto / Type A2)</name>
    <dbReference type="NCBI Taxonomy" id="536232"/>
    <lineage>
        <taxon>Bacteria</taxon>
        <taxon>Bacillati</taxon>
        <taxon>Bacillota</taxon>
        <taxon>Clostridia</taxon>
        <taxon>Eubacteriales</taxon>
        <taxon>Clostridiaceae</taxon>
        <taxon>Clostridium</taxon>
    </lineage>
</organism>
<dbReference type="EC" id="6.1.1.1" evidence="1"/>
<dbReference type="EMBL" id="CP001581">
    <property type="protein sequence ID" value="ACO83437.1"/>
    <property type="molecule type" value="Genomic_DNA"/>
</dbReference>
<dbReference type="RefSeq" id="WP_003357511.1">
    <property type="nucleotide sequence ID" value="NC_012563.1"/>
</dbReference>
<dbReference type="SMR" id="C1FLY1"/>
<dbReference type="KEGG" id="cby:CLM_3759"/>
<dbReference type="eggNOG" id="COG0162">
    <property type="taxonomic scope" value="Bacteria"/>
</dbReference>
<dbReference type="HOGENOM" id="CLU_024003_0_3_9"/>
<dbReference type="Proteomes" id="UP000001374">
    <property type="component" value="Chromosome"/>
</dbReference>
<dbReference type="GO" id="GO:0005829">
    <property type="term" value="C:cytosol"/>
    <property type="evidence" value="ECO:0007669"/>
    <property type="project" value="TreeGrafter"/>
</dbReference>
<dbReference type="GO" id="GO:0005524">
    <property type="term" value="F:ATP binding"/>
    <property type="evidence" value="ECO:0007669"/>
    <property type="project" value="UniProtKB-UniRule"/>
</dbReference>
<dbReference type="GO" id="GO:0003723">
    <property type="term" value="F:RNA binding"/>
    <property type="evidence" value="ECO:0007669"/>
    <property type="project" value="UniProtKB-KW"/>
</dbReference>
<dbReference type="GO" id="GO:0004831">
    <property type="term" value="F:tyrosine-tRNA ligase activity"/>
    <property type="evidence" value="ECO:0007669"/>
    <property type="project" value="UniProtKB-UniRule"/>
</dbReference>
<dbReference type="GO" id="GO:0006437">
    <property type="term" value="P:tyrosyl-tRNA aminoacylation"/>
    <property type="evidence" value="ECO:0007669"/>
    <property type="project" value="UniProtKB-UniRule"/>
</dbReference>
<dbReference type="CDD" id="cd00165">
    <property type="entry name" value="S4"/>
    <property type="match status" value="1"/>
</dbReference>
<dbReference type="CDD" id="cd00805">
    <property type="entry name" value="TyrRS_core"/>
    <property type="match status" value="1"/>
</dbReference>
<dbReference type="FunFam" id="1.10.240.10:FF:000001">
    <property type="entry name" value="Tyrosine--tRNA ligase"/>
    <property type="match status" value="1"/>
</dbReference>
<dbReference type="FunFam" id="3.10.290.10:FF:000022">
    <property type="entry name" value="Tyrosine--tRNA ligase"/>
    <property type="match status" value="1"/>
</dbReference>
<dbReference type="FunFam" id="3.40.50.620:FF:000008">
    <property type="entry name" value="Tyrosine--tRNA ligase"/>
    <property type="match status" value="1"/>
</dbReference>
<dbReference type="Gene3D" id="3.40.50.620">
    <property type="entry name" value="HUPs"/>
    <property type="match status" value="1"/>
</dbReference>
<dbReference type="Gene3D" id="3.10.290.10">
    <property type="entry name" value="RNA-binding S4 domain"/>
    <property type="match status" value="1"/>
</dbReference>
<dbReference type="Gene3D" id="1.10.240.10">
    <property type="entry name" value="Tyrosyl-Transfer RNA Synthetase"/>
    <property type="match status" value="1"/>
</dbReference>
<dbReference type="HAMAP" id="MF_02006">
    <property type="entry name" value="Tyr_tRNA_synth_type1"/>
    <property type="match status" value="1"/>
</dbReference>
<dbReference type="InterPro" id="IPR001412">
    <property type="entry name" value="aa-tRNA-synth_I_CS"/>
</dbReference>
<dbReference type="InterPro" id="IPR002305">
    <property type="entry name" value="aa-tRNA-synth_Ic"/>
</dbReference>
<dbReference type="InterPro" id="IPR014729">
    <property type="entry name" value="Rossmann-like_a/b/a_fold"/>
</dbReference>
<dbReference type="InterPro" id="IPR036986">
    <property type="entry name" value="S4_RNA-bd_sf"/>
</dbReference>
<dbReference type="InterPro" id="IPR054608">
    <property type="entry name" value="SYY-like_C"/>
</dbReference>
<dbReference type="InterPro" id="IPR002307">
    <property type="entry name" value="Tyr-tRNA-ligase"/>
</dbReference>
<dbReference type="InterPro" id="IPR024088">
    <property type="entry name" value="Tyr-tRNA-ligase_bac-type"/>
</dbReference>
<dbReference type="InterPro" id="IPR024107">
    <property type="entry name" value="Tyr-tRNA-ligase_bac_1"/>
</dbReference>
<dbReference type="NCBIfam" id="TIGR00234">
    <property type="entry name" value="tyrS"/>
    <property type="match status" value="1"/>
</dbReference>
<dbReference type="PANTHER" id="PTHR11766:SF0">
    <property type="entry name" value="TYROSINE--TRNA LIGASE, MITOCHONDRIAL"/>
    <property type="match status" value="1"/>
</dbReference>
<dbReference type="PANTHER" id="PTHR11766">
    <property type="entry name" value="TYROSYL-TRNA SYNTHETASE"/>
    <property type="match status" value="1"/>
</dbReference>
<dbReference type="Pfam" id="PF22421">
    <property type="entry name" value="SYY_C-terminal"/>
    <property type="match status" value="1"/>
</dbReference>
<dbReference type="Pfam" id="PF00579">
    <property type="entry name" value="tRNA-synt_1b"/>
    <property type="match status" value="1"/>
</dbReference>
<dbReference type="PRINTS" id="PR01040">
    <property type="entry name" value="TRNASYNTHTYR"/>
</dbReference>
<dbReference type="SUPFAM" id="SSF55174">
    <property type="entry name" value="Alpha-L RNA-binding motif"/>
    <property type="match status" value="1"/>
</dbReference>
<dbReference type="SUPFAM" id="SSF52374">
    <property type="entry name" value="Nucleotidylyl transferase"/>
    <property type="match status" value="1"/>
</dbReference>
<dbReference type="PROSITE" id="PS00178">
    <property type="entry name" value="AA_TRNA_LIGASE_I"/>
    <property type="match status" value="1"/>
</dbReference>
<dbReference type="PROSITE" id="PS50889">
    <property type="entry name" value="S4"/>
    <property type="match status" value="1"/>
</dbReference>
<reference key="1">
    <citation type="submission" date="2008-10" db="EMBL/GenBank/DDBJ databases">
        <title>Genome sequence of Clostridium botulinum A2 Kyoto.</title>
        <authorList>
            <person name="Shrivastava S."/>
            <person name="Brinkac L.M."/>
            <person name="Brown J.L."/>
            <person name="Bruce D."/>
            <person name="Detter C.C."/>
            <person name="Johnson E.A."/>
            <person name="Munk C.A."/>
            <person name="Smith L.A."/>
            <person name="Smith T.J."/>
            <person name="Sutton G."/>
            <person name="Brettin T.S."/>
        </authorList>
    </citation>
    <scope>NUCLEOTIDE SEQUENCE [LARGE SCALE GENOMIC DNA]</scope>
    <source>
        <strain>Kyoto / Type A2</strain>
    </source>
</reference>
<accession>C1FLY1</accession>
<proteinExistence type="inferred from homology"/>
<gene>
    <name evidence="1" type="primary">tyrS</name>
    <name type="ordered locus">CLM_3759</name>
</gene>
<sequence>MSNVYDILKERGYIKQLTHEEEIRELLGKEKISFYIGFDPTADSLHVGHFLQMMVMAHMQKAGHRPIALVGGGTGMIGDPTGKTDMRKMMTKEQIEHNCNCFKKQLAKIIDFSEDKAIMVNNADWLLNLNYIEFLREIGVHFSVNKMLTAECFKSRLEKGLSFLEFNYMLMQGYDFLELNRKYNCVMELGGDDQWSNILAGVDLIRRKESKSAYGMTFTLLTNSEGKKMGKTESGALWLDPEKTSPYEFYQYWRNVADADVEKCLRLITFLPMDEVRRLSSLEGAEINEAKKVLAFEVTKLIHGEEEAQKAKIAAEALFGGNAKDLGNMPTAYIDKNDLNNLLVDLLVKCEIFPSKSEARRLIKQGGLYLNDEKVTDMNLVVTEEHVTEDGIMIRRGKKNFNRIVVE</sequence>